<keyword id="KW-0025">Alternative splicing</keyword>
<keyword id="KW-0106">Calcium</keyword>
<keyword id="KW-1003">Cell membrane</keyword>
<keyword id="KW-0963">Cytoplasm</keyword>
<keyword id="KW-0967">Endosome</keyword>
<keyword id="KW-0378">Hydrolase</keyword>
<keyword id="KW-0442">Lipid degradation</keyword>
<keyword id="KW-0443">Lipid metabolism</keyword>
<keyword id="KW-0458">Lysosome</keyword>
<keyword id="KW-0472">Membrane</keyword>
<keyword id="KW-0479">Metal-binding</keyword>
<keyword id="KW-0597">Phosphoprotein</keyword>
<keyword id="KW-1185">Reference proteome</keyword>
<keyword id="KW-0808">Transferase</keyword>
<name>PA24E_MOUSE</name>
<reference key="1">
    <citation type="journal article" date="2005" name="J. Biol. Chem.">
        <title>Identification of novel cytosolic phospholipase A(2)s, murine cPLA(2)delta, epsilon, and zeta, which form a gene cluster with cPLA(2)beta.</title>
        <authorList>
            <person name="Ohto T."/>
            <person name="Uozumi N."/>
            <person name="Hirabayashi T."/>
            <person name="Shimizu T."/>
        </authorList>
    </citation>
    <scope>NUCLEOTIDE SEQUENCE [MRNA] (ISOFORM 1)</scope>
    <scope>FUNCTION</scope>
    <scope>ACTIVITY REGULATION</scope>
    <scope>SUBCELLULAR LOCATION</scope>
    <scope>TISSUE SPECIFICITY</scope>
    <source>
        <strain>C57BL/6J</strain>
    </source>
</reference>
<reference key="2">
    <citation type="journal article" date="2005" name="Science">
        <title>The transcriptional landscape of the mammalian genome.</title>
        <authorList>
            <person name="Carninci P."/>
            <person name="Kasukawa T."/>
            <person name="Katayama S."/>
            <person name="Gough J."/>
            <person name="Frith M.C."/>
            <person name="Maeda N."/>
            <person name="Oyama R."/>
            <person name="Ravasi T."/>
            <person name="Lenhard B."/>
            <person name="Wells C."/>
            <person name="Kodzius R."/>
            <person name="Shimokawa K."/>
            <person name="Bajic V.B."/>
            <person name="Brenner S.E."/>
            <person name="Batalov S."/>
            <person name="Forrest A.R."/>
            <person name="Zavolan M."/>
            <person name="Davis M.J."/>
            <person name="Wilming L.G."/>
            <person name="Aidinis V."/>
            <person name="Allen J.E."/>
            <person name="Ambesi-Impiombato A."/>
            <person name="Apweiler R."/>
            <person name="Aturaliya R.N."/>
            <person name="Bailey T.L."/>
            <person name="Bansal M."/>
            <person name="Baxter L."/>
            <person name="Beisel K.W."/>
            <person name="Bersano T."/>
            <person name="Bono H."/>
            <person name="Chalk A.M."/>
            <person name="Chiu K.P."/>
            <person name="Choudhary V."/>
            <person name="Christoffels A."/>
            <person name="Clutterbuck D.R."/>
            <person name="Crowe M.L."/>
            <person name="Dalla E."/>
            <person name="Dalrymple B.P."/>
            <person name="de Bono B."/>
            <person name="Della Gatta G."/>
            <person name="di Bernardo D."/>
            <person name="Down T."/>
            <person name="Engstrom P."/>
            <person name="Fagiolini M."/>
            <person name="Faulkner G."/>
            <person name="Fletcher C.F."/>
            <person name="Fukushima T."/>
            <person name="Furuno M."/>
            <person name="Futaki S."/>
            <person name="Gariboldi M."/>
            <person name="Georgii-Hemming P."/>
            <person name="Gingeras T.R."/>
            <person name="Gojobori T."/>
            <person name="Green R.E."/>
            <person name="Gustincich S."/>
            <person name="Harbers M."/>
            <person name="Hayashi Y."/>
            <person name="Hensch T.K."/>
            <person name="Hirokawa N."/>
            <person name="Hill D."/>
            <person name="Huminiecki L."/>
            <person name="Iacono M."/>
            <person name="Ikeo K."/>
            <person name="Iwama A."/>
            <person name="Ishikawa T."/>
            <person name="Jakt M."/>
            <person name="Kanapin A."/>
            <person name="Katoh M."/>
            <person name="Kawasawa Y."/>
            <person name="Kelso J."/>
            <person name="Kitamura H."/>
            <person name="Kitano H."/>
            <person name="Kollias G."/>
            <person name="Krishnan S.P."/>
            <person name="Kruger A."/>
            <person name="Kummerfeld S.K."/>
            <person name="Kurochkin I.V."/>
            <person name="Lareau L.F."/>
            <person name="Lazarevic D."/>
            <person name="Lipovich L."/>
            <person name="Liu J."/>
            <person name="Liuni S."/>
            <person name="McWilliam S."/>
            <person name="Madan Babu M."/>
            <person name="Madera M."/>
            <person name="Marchionni L."/>
            <person name="Matsuda H."/>
            <person name="Matsuzawa S."/>
            <person name="Miki H."/>
            <person name="Mignone F."/>
            <person name="Miyake S."/>
            <person name="Morris K."/>
            <person name="Mottagui-Tabar S."/>
            <person name="Mulder N."/>
            <person name="Nakano N."/>
            <person name="Nakauchi H."/>
            <person name="Ng P."/>
            <person name="Nilsson R."/>
            <person name="Nishiguchi S."/>
            <person name="Nishikawa S."/>
            <person name="Nori F."/>
            <person name="Ohara O."/>
            <person name="Okazaki Y."/>
            <person name="Orlando V."/>
            <person name="Pang K.C."/>
            <person name="Pavan W.J."/>
            <person name="Pavesi G."/>
            <person name="Pesole G."/>
            <person name="Petrovsky N."/>
            <person name="Piazza S."/>
            <person name="Reed J."/>
            <person name="Reid J.F."/>
            <person name="Ring B.Z."/>
            <person name="Ringwald M."/>
            <person name="Rost B."/>
            <person name="Ruan Y."/>
            <person name="Salzberg S.L."/>
            <person name="Sandelin A."/>
            <person name="Schneider C."/>
            <person name="Schoenbach C."/>
            <person name="Sekiguchi K."/>
            <person name="Semple C.A."/>
            <person name="Seno S."/>
            <person name="Sessa L."/>
            <person name="Sheng Y."/>
            <person name="Shibata Y."/>
            <person name="Shimada H."/>
            <person name="Shimada K."/>
            <person name="Silva D."/>
            <person name="Sinclair B."/>
            <person name="Sperling S."/>
            <person name="Stupka E."/>
            <person name="Sugiura K."/>
            <person name="Sultana R."/>
            <person name="Takenaka Y."/>
            <person name="Taki K."/>
            <person name="Tammoja K."/>
            <person name="Tan S.L."/>
            <person name="Tang S."/>
            <person name="Taylor M.S."/>
            <person name="Tegner J."/>
            <person name="Teichmann S.A."/>
            <person name="Ueda H.R."/>
            <person name="van Nimwegen E."/>
            <person name="Verardo R."/>
            <person name="Wei C.L."/>
            <person name="Yagi K."/>
            <person name="Yamanishi H."/>
            <person name="Zabarovsky E."/>
            <person name="Zhu S."/>
            <person name="Zimmer A."/>
            <person name="Hide W."/>
            <person name="Bult C."/>
            <person name="Grimmond S.M."/>
            <person name="Teasdale R.D."/>
            <person name="Liu E.T."/>
            <person name="Brusic V."/>
            <person name="Quackenbush J."/>
            <person name="Wahlestedt C."/>
            <person name="Mattick J.S."/>
            <person name="Hume D.A."/>
            <person name="Kai C."/>
            <person name="Sasaki D."/>
            <person name="Tomaru Y."/>
            <person name="Fukuda S."/>
            <person name="Kanamori-Katayama M."/>
            <person name="Suzuki M."/>
            <person name="Aoki J."/>
            <person name="Arakawa T."/>
            <person name="Iida J."/>
            <person name="Imamura K."/>
            <person name="Itoh M."/>
            <person name="Kato T."/>
            <person name="Kawaji H."/>
            <person name="Kawagashira N."/>
            <person name="Kawashima T."/>
            <person name="Kojima M."/>
            <person name="Kondo S."/>
            <person name="Konno H."/>
            <person name="Nakano K."/>
            <person name="Ninomiya N."/>
            <person name="Nishio T."/>
            <person name="Okada M."/>
            <person name="Plessy C."/>
            <person name="Shibata K."/>
            <person name="Shiraki T."/>
            <person name="Suzuki S."/>
            <person name="Tagami M."/>
            <person name="Waki K."/>
            <person name="Watahiki A."/>
            <person name="Okamura-Oho Y."/>
            <person name="Suzuki H."/>
            <person name="Kawai J."/>
            <person name="Hayashizaki Y."/>
        </authorList>
    </citation>
    <scope>NUCLEOTIDE SEQUENCE [LARGE SCALE MRNA] (ISOFORM 2)</scope>
    <source>
        <strain>C57BL/6J</strain>
        <tissue>Cerebellum</tissue>
    </source>
</reference>
<reference key="3">
    <citation type="journal article" date="2010" name="Cell">
        <title>A tissue-specific atlas of mouse protein phosphorylation and expression.</title>
        <authorList>
            <person name="Huttlin E.L."/>
            <person name="Jedrychowski M.P."/>
            <person name="Elias J.E."/>
            <person name="Goswami T."/>
            <person name="Rad R."/>
            <person name="Beausoleil S.A."/>
            <person name="Villen J."/>
            <person name="Haas W."/>
            <person name="Sowa M.E."/>
            <person name="Gygi S.P."/>
        </authorList>
    </citation>
    <scope>PHOSPHORYLATION [LARGE SCALE ANALYSIS] AT SER-808</scope>
    <scope>IDENTIFICATION BY MASS SPECTROMETRY [LARGE SCALE ANALYSIS]</scope>
    <source>
        <tissue>Brain</tissue>
    </source>
</reference>
<reference key="4">
    <citation type="journal article" date="2014" name="J. Cell Sci.">
        <title>Cytosolic phospholipase A(2)epsilon drives recycling through the clathrin-independent endocytic route.</title>
        <authorList>
            <person name="Capestrano M."/>
            <person name="Mariggio S."/>
            <person name="Perinetti G."/>
            <person name="Egorova A.V."/>
            <person name="Iacobacci S."/>
            <person name="Santoro M."/>
            <person name="Di Pentima A."/>
            <person name="Iurisci C."/>
            <person name="Egorov M.V."/>
            <person name="Di Tullio G."/>
            <person name="Buccione R."/>
            <person name="Luini A."/>
            <person name="Polishchuk R.S."/>
        </authorList>
    </citation>
    <scope>FUNCTION</scope>
    <scope>SUBCELLULAR LOCATION</scope>
    <scope>REGION</scope>
    <scope>MUTAGENESIS OF SER-420</scope>
</reference>
<reference key="5">
    <citation type="journal article" date="2016" name="Nat. Chem. Biol.">
        <title>A calcium-dependent acyltransferase that produces N-acyl phosphatidylethanolamines.</title>
        <authorList>
            <person name="Ogura Y."/>
            <person name="Parsons W.H."/>
            <person name="Kamat S.S."/>
            <person name="Cravatt B.F."/>
        </authorList>
    </citation>
    <scope>FUNCTION</scope>
    <scope>CATALYTIC ACTIVITY</scope>
    <scope>COFACTOR</scope>
    <scope>ACTIVITY REGULATION</scope>
    <scope>TISSUE SPECIFICITY</scope>
    <scope>MUTAGENESIS OF SER-420</scope>
</reference>
<reference key="6">
    <citation type="journal article" date="2018" name="Biochim. Biophys. Acta">
        <title>Phosphatidylserine-stimulated production of N-acyl-phosphatidylethanolamines by Ca2+-dependent N-acyltransferase.</title>
        <authorList>
            <person name="Hussain Z."/>
            <person name="Uyama T."/>
            <person name="Kawai K."/>
            <person name="Binte Mustafiz S.S."/>
            <person name="Tsuboi K."/>
            <person name="Araki N."/>
            <person name="Ueda N."/>
        </authorList>
    </citation>
    <scope>FUNCTION</scope>
    <scope>CATALYTIC ACTIVITY</scope>
    <scope>COFACTOR</scope>
    <scope>BIOPHYSICOCHEMICAL PROPERTIES</scope>
    <scope>ACTIVITY REGULATION</scope>
    <scope>SUBCELLULAR LOCATION</scope>
</reference>
<feature type="chain" id="PRO_0000247026" description="Cytosolic phospholipase A2 epsilon">
    <location>
        <begin position="1"/>
        <end position="875"/>
    </location>
</feature>
<feature type="domain" description="C2" evidence="2">
    <location>
        <begin position="60"/>
        <end position="183"/>
    </location>
</feature>
<feature type="domain" description="PLA2c" evidence="3">
    <location>
        <begin position="332"/>
        <end position="875"/>
    </location>
</feature>
<feature type="region of interest" description="Disordered" evidence="4">
    <location>
        <begin position="16"/>
        <end position="70"/>
    </location>
</feature>
<feature type="region of interest" description="Required for localization at membrane structures" evidence="6">
    <location>
        <begin position="865"/>
        <end position="875"/>
    </location>
</feature>
<feature type="compositionally biased region" description="Low complexity" evidence="4">
    <location>
        <begin position="61"/>
        <end position="70"/>
    </location>
</feature>
<feature type="active site" description="Nucleophile" evidence="1">
    <location>
        <position position="420"/>
    </location>
</feature>
<feature type="active site" description="Proton acceptor" evidence="1">
    <location>
        <position position="708"/>
    </location>
</feature>
<feature type="binding site" evidence="2">
    <location>
        <position position="97"/>
    </location>
    <ligand>
        <name>Ca(2+)</name>
        <dbReference type="ChEBI" id="CHEBI:29108"/>
        <label>1</label>
    </ligand>
</feature>
<feature type="binding site" evidence="2">
    <location>
        <position position="97"/>
    </location>
    <ligand>
        <name>Ca(2+)</name>
        <dbReference type="ChEBI" id="CHEBI:29108"/>
        <label>2</label>
    </ligand>
</feature>
<feature type="binding site" evidence="2">
    <location>
        <position position="103"/>
    </location>
    <ligand>
        <name>Ca(2+)</name>
        <dbReference type="ChEBI" id="CHEBI:29108"/>
        <label>1</label>
    </ligand>
</feature>
<feature type="binding site" evidence="2">
    <location>
        <position position="153"/>
    </location>
    <ligand>
        <name>Ca(2+)</name>
        <dbReference type="ChEBI" id="CHEBI:29108"/>
        <label>1</label>
    </ligand>
</feature>
<feature type="binding site" evidence="2">
    <location>
        <position position="153"/>
    </location>
    <ligand>
        <name>Ca(2+)</name>
        <dbReference type="ChEBI" id="CHEBI:29108"/>
        <label>2</label>
    </ligand>
</feature>
<feature type="binding site" evidence="2">
    <location>
        <position position="155"/>
    </location>
    <ligand>
        <name>Ca(2+)</name>
        <dbReference type="ChEBI" id="CHEBI:29108"/>
        <label>1</label>
    </ligand>
</feature>
<feature type="binding site" evidence="2">
    <location>
        <position position="155"/>
    </location>
    <ligand>
        <name>Ca(2+)</name>
        <dbReference type="ChEBI" id="CHEBI:29108"/>
        <label>2</label>
    </ligand>
</feature>
<feature type="binding site" evidence="2">
    <location>
        <position position="161"/>
    </location>
    <ligand>
        <name>Ca(2+)</name>
        <dbReference type="ChEBI" id="CHEBI:29108"/>
        <label>2</label>
    </ligand>
</feature>
<feature type="modified residue" description="Phosphoserine" evidence="17">
    <location>
        <position position="808"/>
    </location>
</feature>
<feature type="splice variant" id="VSP_019884" description="In isoform 2." evidence="9">
    <location>
        <begin position="1"/>
        <end position="243"/>
    </location>
</feature>
<feature type="splice variant" id="VSP_019885" description="In isoform 2." evidence="9">
    <original>LWSSIFSLNLLDAWNL</original>
    <variation>DSLRYSAPERARPAFD</variation>
    <location>
        <begin position="584"/>
        <end position="599"/>
    </location>
</feature>
<feature type="splice variant" id="VSP_019886" description="In isoform 2." evidence="9">
    <location>
        <begin position="600"/>
        <end position="875"/>
    </location>
</feature>
<feature type="mutagenesis site" description="Impairs calcium-dependent biosynthesis of NAPEs and NAEs. Reduces tubule growth and cargo transport from clathrin-independent endosomes." evidence="6 7">
    <original>S</original>
    <variation>A</variation>
    <location>
        <position position="420"/>
    </location>
</feature>
<feature type="sequence conflict" description="In Ref. 2; BAC33531." evidence="12" ref="2">
    <original>R</original>
    <variation>K</variation>
    <location>
        <position position="513"/>
    </location>
</feature>
<dbReference type="EC" id="3.1.1.4" evidence="5"/>
<dbReference type="EMBL" id="AB195277">
    <property type="protein sequence ID" value="BAD98153.1"/>
    <property type="molecule type" value="mRNA"/>
</dbReference>
<dbReference type="EMBL" id="AK049063">
    <property type="protein sequence ID" value="BAC33531.1"/>
    <property type="molecule type" value="mRNA"/>
</dbReference>
<dbReference type="CCDS" id="CCDS16616.1">
    <molecule id="Q50L42-1"/>
</dbReference>
<dbReference type="RefSeq" id="NP_808513.2">
    <molecule id="Q50L42-1"/>
    <property type="nucleotide sequence ID" value="NM_177845.4"/>
</dbReference>
<dbReference type="SMR" id="Q50L42"/>
<dbReference type="BioGRID" id="236777">
    <property type="interactions" value="1"/>
</dbReference>
<dbReference type="FunCoup" id="Q50L42">
    <property type="interactions" value="766"/>
</dbReference>
<dbReference type="STRING" id="10090.ENSMUSP00000087525"/>
<dbReference type="SwissLipids" id="SLP:000001822"/>
<dbReference type="iPTMnet" id="Q50L42"/>
<dbReference type="PhosphoSitePlus" id="Q50L42"/>
<dbReference type="SwissPalm" id="Q50L42"/>
<dbReference type="PaxDb" id="10090-ENSMUSP00000087525"/>
<dbReference type="ProteomicsDB" id="294371">
    <molecule id="Q50L42-1"/>
</dbReference>
<dbReference type="ProteomicsDB" id="294372">
    <molecule id="Q50L42-2"/>
</dbReference>
<dbReference type="Antibodypedia" id="42114">
    <property type="antibodies" value="79 antibodies from 22 providers"/>
</dbReference>
<dbReference type="DNASU" id="329502"/>
<dbReference type="Ensembl" id="ENSMUST00000090071.5">
    <molecule id="Q50L42-1"/>
    <property type="protein sequence ID" value="ENSMUSP00000087525.5"/>
    <property type="gene ID" value="ENSMUSG00000050211.15"/>
</dbReference>
<dbReference type="GeneID" id="329502"/>
<dbReference type="KEGG" id="mmu:329502"/>
<dbReference type="UCSC" id="uc008lve.1">
    <molecule id="Q50L42-1"/>
    <property type="organism name" value="mouse"/>
</dbReference>
<dbReference type="UCSC" id="uc008lvg.1">
    <molecule id="Q50L42-2"/>
    <property type="organism name" value="mouse"/>
</dbReference>
<dbReference type="AGR" id="MGI:1919144"/>
<dbReference type="CTD" id="123745"/>
<dbReference type="MGI" id="MGI:1919144">
    <property type="gene designation" value="Pla2g4e"/>
</dbReference>
<dbReference type="VEuPathDB" id="HostDB:ENSMUSG00000050211"/>
<dbReference type="eggNOG" id="KOG1028">
    <property type="taxonomic scope" value="Eukaryota"/>
</dbReference>
<dbReference type="eggNOG" id="KOG1325">
    <property type="taxonomic scope" value="Eukaryota"/>
</dbReference>
<dbReference type="GeneTree" id="ENSGT01030000234606"/>
<dbReference type="HOGENOM" id="CLU_011663_0_0_1"/>
<dbReference type="InParanoid" id="Q50L42"/>
<dbReference type="OMA" id="SFENTQR"/>
<dbReference type="OrthoDB" id="419768at2759"/>
<dbReference type="PhylomeDB" id="Q50L42"/>
<dbReference type="TreeFam" id="TF325228"/>
<dbReference type="Reactome" id="R-MMU-1482788">
    <property type="pathway name" value="Acyl chain remodelling of PC"/>
</dbReference>
<dbReference type="Reactome" id="R-MMU-1482801">
    <property type="pathway name" value="Acyl chain remodelling of PS"/>
</dbReference>
<dbReference type="Reactome" id="R-MMU-1482839">
    <property type="pathway name" value="Acyl chain remodelling of PE"/>
</dbReference>
<dbReference type="Reactome" id="R-MMU-1482922">
    <property type="pathway name" value="Acyl chain remodelling of PI"/>
</dbReference>
<dbReference type="Reactome" id="R-MMU-1483115">
    <property type="pathway name" value="Hydrolysis of LPC"/>
</dbReference>
<dbReference type="BioGRID-ORCS" id="329502">
    <property type="hits" value="2 hits in 78 CRISPR screens"/>
</dbReference>
<dbReference type="CD-CODE" id="CE726F99">
    <property type="entry name" value="Postsynaptic density"/>
</dbReference>
<dbReference type="ChiTaRS" id="Pla2g4e">
    <property type="organism name" value="mouse"/>
</dbReference>
<dbReference type="PRO" id="PR:Q50L42"/>
<dbReference type="Proteomes" id="UP000000589">
    <property type="component" value="Chromosome 2"/>
</dbReference>
<dbReference type="RNAct" id="Q50L42">
    <property type="molecule type" value="protein"/>
</dbReference>
<dbReference type="Bgee" id="ENSMUSG00000050211">
    <property type="expression patterns" value="Expressed in lip and 136 other cell types or tissues"/>
</dbReference>
<dbReference type="GO" id="GO:0005737">
    <property type="term" value="C:cytoplasm"/>
    <property type="evidence" value="ECO:0000314"/>
    <property type="project" value="MGI"/>
</dbReference>
<dbReference type="GO" id="GO:0005829">
    <property type="term" value="C:cytosol"/>
    <property type="evidence" value="ECO:0007669"/>
    <property type="project" value="UniProtKB-SubCell"/>
</dbReference>
<dbReference type="GO" id="GO:0031901">
    <property type="term" value="C:early endosome membrane"/>
    <property type="evidence" value="ECO:0000314"/>
    <property type="project" value="UniProtKB"/>
</dbReference>
<dbReference type="GO" id="GO:0005765">
    <property type="term" value="C:lysosomal membrane"/>
    <property type="evidence" value="ECO:0000314"/>
    <property type="project" value="UniProtKB"/>
</dbReference>
<dbReference type="GO" id="GO:0005886">
    <property type="term" value="C:plasma membrane"/>
    <property type="evidence" value="ECO:0000314"/>
    <property type="project" value="UniProtKB"/>
</dbReference>
<dbReference type="GO" id="GO:0005509">
    <property type="term" value="F:calcium ion binding"/>
    <property type="evidence" value="ECO:0007669"/>
    <property type="project" value="InterPro"/>
</dbReference>
<dbReference type="GO" id="GO:0016410">
    <property type="term" value="F:N-acyltransferase activity"/>
    <property type="evidence" value="ECO:0000314"/>
    <property type="project" value="UniProtKB"/>
</dbReference>
<dbReference type="GO" id="GO:0005547">
    <property type="term" value="F:phosphatidylinositol-3,4,5-trisphosphate binding"/>
    <property type="evidence" value="ECO:0000314"/>
    <property type="project" value="UniProtKB"/>
</dbReference>
<dbReference type="GO" id="GO:0043325">
    <property type="term" value="F:phosphatidylinositol-3,4-bisphosphate binding"/>
    <property type="evidence" value="ECO:0000314"/>
    <property type="project" value="UniProtKB"/>
</dbReference>
<dbReference type="GO" id="GO:0080025">
    <property type="term" value="F:phosphatidylinositol-3,5-bisphosphate binding"/>
    <property type="evidence" value="ECO:0000314"/>
    <property type="project" value="UniProtKB"/>
</dbReference>
<dbReference type="GO" id="GO:0032266">
    <property type="term" value="F:phosphatidylinositol-3-phosphate binding"/>
    <property type="evidence" value="ECO:0000314"/>
    <property type="project" value="UniProtKB"/>
</dbReference>
<dbReference type="GO" id="GO:0005546">
    <property type="term" value="F:phosphatidylinositol-4,5-bisphosphate binding"/>
    <property type="evidence" value="ECO:0000314"/>
    <property type="project" value="UniProtKB"/>
</dbReference>
<dbReference type="GO" id="GO:0070273">
    <property type="term" value="F:phosphatidylinositol-4-phosphate binding"/>
    <property type="evidence" value="ECO:0000314"/>
    <property type="project" value="UniProtKB"/>
</dbReference>
<dbReference type="GO" id="GO:0010314">
    <property type="term" value="F:phosphatidylinositol-5-phosphate binding"/>
    <property type="evidence" value="ECO:0000314"/>
    <property type="project" value="UniProtKB"/>
</dbReference>
<dbReference type="GO" id="GO:0004623">
    <property type="term" value="F:phospholipase A2 activity"/>
    <property type="evidence" value="ECO:0000314"/>
    <property type="project" value="MGI"/>
</dbReference>
<dbReference type="GO" id="GO:0070292">
    <property type="term" value="P:N-acylphosphatidylethanolamine metabolic process"/>
    <property type="evidence" value="ECO:0000314"/>
    <property type="project" value="UniProtKB"/>
</dbReference>
<dbReference type="GO" id="GO:0009395">
    <property type="term" value="P:phospholipid catabolic process"/>
    <property type="evidence" value="ECO:0007669"/>
    <property type="project" value="InterPro"/>
</dbReference>
<dbReference type="GO" id="GO:2001137">
    <property type="term" value="P:positive regulation of endocytic recycling"/>
    <property type="evidence" value="ECO:0000315"/>
    <property type="project" value="UniProtKB"/>
</dbReference>
<dbReference type="CDD" id="cd04036">
    <property type="entry name" value="C2_cPLA2"/>
    <property type="match status" value="1"/>
</dbReference>
<dbReference type="CDD" id="cd07201">
    <property type="entry name" value="cPLA2_Grp-IVB-IVD-IVE-IVF"/>
    <property type="match status" value="1"/>
</dbReference>
<dbReference type="FunFam" id="2.60.40.150:FF:000030">
    <property type="entry name" value="Phospholipase A2"/>
    <property type="match status" value="1"/>
</dbReference>
<dbReference type="FunFam" id="3.40.1090.10:FF:000002">
    <property type="entry name" value="Phospholipase A2"/>
    <property type="match status" value="1"/>
</dbReference>
<dbReference type="Gene3D" id="2.60.40.150">
    <property type="entry name" value="C2 domain"/>
    <property type="match status" value="1"/>
</dbReference>
<dbReference type="Gene3D" id="3.40.1090.10">
    <property type="entry name" value="Cytosolic phospholipase A2 catalytic domain"/>
    <property type="match status" value="1"/>
</dbReference>
<dbReference type="InterPro" id="IPR016035">
    <property type="entry name" value="Acyl_Trfase/lysoPLipase"/>
</dbReference>
<dbReference type="InterPro" id="IPR041847">
    <property type="entry name" value="C2_cPLA2"/>
</dbReference>
<dbReference type="InterPro" id="IPR000008">
    <property type="entry name" value="C2_dom"/>
</dbReference>
<dbReference type="InterPro" id="IPR035892">
    <property type="entry name" value="C2_domain_sf"/>
</dbReference>
<dbReference type="InterPro" id="IPR040723">
    <property type="entry name" value="cPLA2_C2"/>
</dbReference>
<dbReference type="InterPro" id="IPR002642">
    <property type="entry name" value="LysoPLipase_cat_dom"/>
</dbReference>
<dbReference type="PANTHER" id="PTHR10728">
    <property type="entry name" value="CYTOSOLIC PHOSPHOLIPASE A2"/>
    <property type="match status" value="1"/>
</dbReference>
<dbReference type="PANTHER" id="PTHR10728:SF24">
    <property type="entry name" value="CYTOSOLIC PHOSPHOLIPASE A2 EPSILON"/>
    <property type="match status" value="1"/>
</dbReference>
<dbReference type="Pfam" id="PF00168">
    <property type="entry name" value="C2"/>
    <property type="match status" value="1"/>
</dbReference>
<dbReference type="Pfam" id="PF18695">
    <property type="entry name" value="cPLA2_C2"/>
    <property type="match status" value="1"/>
</dbReference>
<dbReference type="Pfam" id="PF01735">
    <property type="entry name" value="PLA2_B"/>
    <property type="match status" value="1"/>
</dbReference>
<dbReference type="SMART" id="SM00239">
    <property type="entry name" value="C2"/>
    <property type="match status" value="1"/>
</dbReference>
<dbReference type="SMART" id="SM00022">
    <property type="entry name" value="PLAc"/>
    <property type="match status" value="1"/>
</dbReference>
<dbReference type="SUPFAM" id="SSF49562">
    <property type="entry name" value="C2 domain (Calcium/lipid-binding domain, CaLB)"/>
    <property type="match status" value="1"/>
</dbReference>
<dbReference type="SUPFAM" id="SSF52151">
    <property type="entry name" value="FabD/lysophospholipase-like"/>
    <property type="match status" value="1"/>
</dbReference>
<dbReference type="PROSITE" id="PS50004">
    <property type="entry name" value="C2"/>
    <property type="match status" value="1"/>
</dbReference>
<dbReference type="PROSITE" id="PS51210">
    <property type="entry name" value="PLA2C"/>
    <property type="match status" value="1"/>
</dbReference>
<organism>
    <name type="scientific">Mus musculus</name>
    <name type="common">Mouse</name>
    <dbReference type="NCBI Taxonomy" id="10090"/>
    <lineage>
        <taxon>Eukaryota</taxon>
        <taxon>Metazoa</taxon>
        <taxon>Chordata</taxon>
        <taxon>Craniata</taxon>
        <taxon>Vertebrata</taxon>
        <taxon>Euteleostomi</taxon>
        <taxon>Mammalia</taxon>
        <taxon>Eutheria</taxon>
        <taxon>Euarchontoglires</taxon>
        <taxon>Glires</taxon>
        <taxon>Rodentia</taxon>
        <taxon>Myomorpha</taxon>
        <taxon>Muroidea</taxon>
        <taxon>Muridae</taxon>
        <taxon>Murinae</taxon>
        <taxon>Mus</taxon>
        <taxon>Mus</taxon>
    </lineage>
</organism>
<proteinExistence type="evidence at protein level"/>
<protein>
    <recommendedName>
        <fullName evidence="10">Cytosolic phospholipase A2 epsilon</fullName>
        <shortName evidence="10">cPLA2-epsilon</shortName>
        <ecNumber evidence="5">3.1.1.4</ecNumber>
    </recommendedName>
    <alternativeName>
        <fullName evidence="11">Calcium-dependent N-acyltransferase</fullName>
    </alternativeName>
    <alternativeName>
        <fullName>Phospholipase A2 group IVE</fullName>
    </alternativeName>
</protein>
<gene>
    <name type="primary">Pla2g4e</name>
</gene>
<comment type="function">
    <text evidence="5 6 7 8">Calcium-dependent N-acyltransferase involved in the biosynthesis of N-acyl ethanolamines (NAEs) in the brain (PubMed:27399000). Transfers the sn-1 fatty acyl chain of phosphatidylcholine (fatty acyl donor) to the amine group of phosphatidylethanolamine (fatty acyl acceptor) to generate N-acyl phosphatidylethanolamine (NAPE). Similarly can use plasmenylethanolamine as a fatty acyl acceptor to form N-acyl plasmenylethanolamine (N-Acyl-PlsEt). Both NAPE and N-Acyl-PlsEt can serve as precursors of bioactive NAEs like N-arachidonoyl phosphatidylethanolamine also called anandamide (PubMed:27399000, PubMed:29447909). Has weak phospholipase A2 and lysophospholipase activities (PubMed:15866882, PubMed:27399000). Regulates intracellular membrane trafficking that requires modulation of membrane curvature as it occurs by enrichment in lysophospholipids. Promotes tubule formation involved in clathrin-independent endocytotic trafficking and cargo recycling (PubMed:24413173).</text>
</comment>
<comment type="catalytic activity">
    <reaction evidence="7">
        <text>a 1,2-diacyl-sn-glycero-3-phosphoethanolamine + a 1,2-diacyl-sn-glycero-3-phosphocholine = an N-acyl-1,2-diacyl-sn-glycero-3-phosphoethanolamine + a 2-acyl-sn-glycero-3-phosphocholine + H(+)</text>
        <dbReference type="Rhea" id="RHEA:45188"/>
        <dbReference type="ChEBI" id="CHEBI:15378"/>
        <dbReference type="ChEBI" id="CHEBI:57643"/>
        <dbReference type="ChEBI" id="CHEBI:57875"/>
        <dbReference type="ChEBI" id="CHEBI:62537"/>
        <dbReference type="ChEBI" id="CHEBI:64612"/>
    </reaction>
    <physiologicalReaction direction="left-to-right" evidence="15">
        <dbReference type="Rhea" id="RHEA:45189"/>
    </physiologicalReaction>
</comment>
<comment type="catalytic activity">
    <reaction evidence="7">
        <text>1-hexadecanoyl-2-octadecanoyl-sn-glycero-3-phosphocholine + 1,2-di-(9Z-octadecenoyl)-sn-glycero-3-phosphoethanolamine = 2-octadecanoyl-sn-glycero-3-phosphocholine + N-hexadecanoyl-1,2-di-(9Z-octadecenoyl)-sn-glycero-3-phosphoethanolamine + H(+)</text>
        <dbReference type="Rhea" id="RHEA:55252"/>
        <dbReference type="ChEBI" id="CHEBI:15378"/>
        <dbReference type="ChEBI" id="CHEBI:73000"/>
        <dbReference type="ChEBI" id="CHEBI:74986"/>
        <dbReference type="ChEBI" id="CHEBI:76076"/>
        <dbReference type="ChEBI" id="CHEBI:78097"/>
    </reaction>
    <physiologicalReaction direction="left-to-right" evidence="15">
        <dbReference type="Rhea" id="RHEA:55253"/>
    </physiologicalReaction>
</comment>
<comment type="catalytic activity">
    <reaction evidence="7">
        <text>1-octadecanoyl-2-hexadecanoyl-sn-glycero-3-phosphocholine + 1,2-di-(9Z-octadecenoyl)-sn-glycero-3-phosphoethanolamine = N-octadecanoyl-1,2-di-(9Z-octadecenoyl)-sn-glycero-3-phosphoethanolamine + 2-hexadecanoyl-sn-glycero-3-phosphocholine + H(+)</text>
        <dbReference type="Rhea" id="RHEA:55248"/>
        <dbReference type="ChEBI" id="CHEBI:15378"/>
        <dbReference type="ChEBI" id="CHEBI:74986"/>
        <dbReference type="ChEBI" id="CHEBI:75026"/>
        <dbReference type="ChEBI" id="CHEBI:76078"/>
        <dbReference type="ChEBI" id="CHEBI:85292"/>
    </reaction>
    <physiologicalReaction direction="left-to-right" evidence="15">
        <dbReference type="Rhea" id="RHEA:55249"/>
    </physiologicalReaction>
</comment>
<comment type="catalytic activity">
    <reaction evidence="7 8">
        <text>1,2-di-(9Z-octadecenoyl)-sn-glycero-3-phosphoethanolamine + 1,2-dihexadecanoyl-sn-glycero-3-phosphocholine = N-hexadecanoyl-1,2-di-(9Z-octadecenoyl)-sn-glycero-3-phosphoethanolamine + 2-hexadecanoyl-sn-glycero-3-phosphocholine + H(+)</text>
        <dbReference type="Rhea" id="RHEA:45172"/>
        <dbReference type="ChEBI" id="CHEBI:15378"/>
        <dbReference type="ChEBI" id="CHEBI:72999"/>
        <dbReference type="ChEBI" id="CHEBI:74986"/>
        <dbReference type="ChEBI" id="CHEBI:76078"/>
        <dbReference type="ChEBI" id="CHEBI:78097"/>
    </reaction>
    <physiologicalReaction direction="left-to-right" evidence="15">
        <dbReference type="Rhea" id="RHEA:45173"/>
    </physiologicalReaction>
</comment>
<comment type="catalytic activity">
    <reaction evidence="7">
        <text>1,2-di-(5Z,8Z,11Z,14Z-eicosatetraenoyl)-sn-glycero-3-phosphocholine + 1,2-di-(9Z-octadecenoyl)-sn-glycero-3-phosphoethanolamine = N-(5Z,8Z,11Z,14Z-eicosatetraenoyl)-1,2-di-(9Z-octadecenoyl)-sn-glycero-3-phosphoethanolamine + 2-(5Z,8Z,11Z,14Z)-eicosatetraenoyl-sn-glycero-3-phosphocholine + H(+)</text>
        <dbReference type="Rhea" id="RHEA:55256"/>
        <dbReference type="ChEBI" id="CHEBI:15378"/>
        <dbReference type="ChEBI" id="CHEBI:60657"/>
        <dbReference type="ChEBI" id="CHEBI:74986"/>
        <dbReference type="ChEBI" id="CHEBI:76079"/>
        <dbReference type="ChEBI" id="CHEBI:85277"/>
    </reaction>
    <physiologicalReaction direction="left-to-right" evidence="15">
        <dbReference type="Rhea" id="RHEA:55257"/>
    </physiologicalReaction>
</comment>
<comment type="catalytic activity">
    <reaction evidence="7">
        <text>2 1,2-di-(9Z-octadecenoyl)-sn-glycero-3-phosphoethanolamine = N,1,2-tri-(9Z-octadecenoyl)-sn-glycero-3-phosphoethanolamine + 2-(9Z-octadecenoyl)-sn-glycero-3-phosphoethanolamine + H(+)</text>
        <dbReference type="Rhea" id="RHEA:55260"/>
        <dbReference type="ChEBI" id="CHEBI:15378"/>
        <dbReference type="ChEBI" id="CHEBI:74986"/>
        <dbReference type="ChEBI" id="CHEBI:76088"/>
        <dbReference type="ChEBI" id="CHEBI:85291"/>
    </reaction>
    <physiologicalReaction direction="left-to-right" evidence="15">
        <dbReference type="Rhea" id="RHEA:55261"/>
    </physiologicalReaction>
</comment>
<comment type="catalytic activity">
    <reaction evidence="5">
        <text>a 1,2-diacyl-sn-glycero-3-phosphocholine + H2O = a 1-acyl-sn-glycero-3-phosphocholine + a fatty acid + H(+)</text>
        <dbReference type="Rhea" id="RHEA:15801"/>
        <dbReference type="ChEBI" id="CHEBI:15377"/>
        <dbReference type="ChEBI" id="CHEBI:15378"/>
        <dbReference type="ChEBI" id="CHEBI:28868"/>
        <dbReference type="ChEBI" id="CHEBI:57643"/>
        <dbReference type="ChEBI" id="CHEBI:58168"/>
        <dbReference type="EC" id="3.1.1.4"/>
    </reaction>
    <physiologicalReaction direction="left-to-right" evidence="13">
        <dbReference type="Rhea" id="RHEA:15802"/>
    </physiologicalReaction>
</comment>
<comment type="catalytic activity">
    <reaction evidence="8">
        <text>1-(1Z-octadecenyl)-2-(9Z-octadecenoyl)-sn-glycero-3-phosphoethanolamine + 1,2-dihexadecanoyl-sn-glycero-3-phosphocholine = 1-O-(1Z-octadecenoyl)-2-(9Z-octadecenoyl)-sn-glycero-3-phospho-N-hexadecanoyl-ethanolamine + 2-hexadecanoyl-sn-glycero-3-phosphocholine + H(+)</text>
        <dbReference type="Rhea" id="RHEA:63592"/>
        <dbReference type="ChEBI" id="CHEBI:15378"/>
        <dbReference type="ChEBI" id="CHEBI:72999"/>
        <dbReference type="ChEBI" id="CHEBI:76078"/>
        <dbReference type="ChEBI" id="CHEBI:78340"/>
        <dbReference type="ChEBI" id="CHEBI:138663"/>
    </reaction>
    <physiologicalReaction direction="left-to-right" evidence="16">
        <dbReference type="Rhea" id="RHEA:63593"/>
    </physiologicalReaction>
</comment>
<comment type="catalytic activity">
    <reaction evidence="5">
        <text>1-hexadecanoyl-2-(5Z,8Z,11Z,14Z-eicosatetraenoyl)-sn-glycero-3-phosphocholine + H2O = 1-hexadecanoyl-sn-glycero-3-phosphocholine + (5Z,8Z,11Z,14Z)-eicosatetraenoate + H(+)</text>
        <dbReference type="Rhea" id="RHEA:40427"/>
        <dbReference type="ChEBI" id="CHEBI:15377"/>
        <dbReference type="ChEBI" id="CHEBI:15378"/>
        <dbReference type="ChEBI" id="CHEBI:32395"/>
        <dbReference type="ChEBI" id="CHEBI:72998"/>
        <dbReference type="ChEBI" id="CHEBI:73003"/>
    </reaction>
    <physiologicalReaction direction="left-to-right" evidence="13">
        <dbReference type="Rhea" id="RHEA:40428"/>
    </physiologicalReaction>
</comment>
<comment type="catalytic activity">
    <reaction evidence="5">
        <text>1-hexadecanoyl-sn-glycero-3-phosphocholine + H2O = sn-glycerol 3-phosphocholine + hexadecanoate + H(+)</text>
        <dbReference type="Rhea" id="RHEA:40435"/>
        <dbReference type="ChEBI" id="CHEBI:7896"/>
        <dbReference type="ChEBI" id="CHEBI:15377"/>
        <dbReference type="ChEBI" id="CHEBI:15378"/>
        <dbReference type="ChEBI" id="CHEBI:16870"/>
        <dbReference type="ChEBI" id="CHEBI:72998"/>
    </reaction>
    <physiologicalReaction direction="left-to-right" evidence="13">
        <dbReference type="Rhea" id="RHEA:40436"/>
    </physiologicalReaction>
</comment>
<comment type="cofactor">
    <cofactor evidence="2 7 8">
        <name>Ca(2+)</name>
        <dbReference type="ChEBI" id="CHEBI:29108"/>
    </cofactor>
</comment>
<comment type="activity regulation">
    <text evidence="7 8">Stimulated by cytosolic Ca(2+) (PubMed:27399000, PubMed:29447909). Stimulated by anionic phospholipids such as phosphatidylserine (PubMed:29447909).</text>
</comment>
<comment type="biophysicochemical properties">
    <phDependence>
        <text evidence="8">Optimum pH is 8.</text>
    </phDependence>
</comment>
<comment type="subcellular location">
    <subcellularLocation>
        <location evidence="5">Cytoplasm</location>
        <location evidence="5">Cytosol</location>
    </subcellularLocation>
    <subcellularLocation>
        <location evidence="6 8">Early endosome membrane</location>
        <topology evidence="12">Peripheral membrane protein</topology>
        <orientation evidence="14">Cytoplasmic side</orientation>
    </subcellularLocation>
    <subcellularLocation>
        <location evidence="5 6 8">Lysosome membrane</location>
        <topology evidence="12">Peripheral membrane protein</topology>
        <orientation evidence="14">Cytoplasmic side</orientation>
    </subcellularLocation>
    <subcellularLocation>
        <location evidence="6 8">Cell membrane</location>
        <topology evidence="12">Peripheral membrane protein</topology>
        <orientation evidence="14">Cytoplasmic side</orientation>
    </subcellularLocation>
    <text evidence="6">Targeted to clathrin-independent endocytotic vesicles through binding to phosphoinositides, especially phosphatidylinositol 4,5-bisphosphates.</text>
</comment>
<comment type="alternative products">
    <event type="alternative splicing"/>
    <isoform>
        <id>Q50L42-1</id>
        <name>1</name>
        <sequence type="displayed"/>
    </isoform>
    <isoform>
        <id>Q50L42-2</id>
        <name>2</name>
        <sequence type="described" ref="VSP_019884 VSP_019885 VSP_019886"/>
    </isoform>
</comment>
<comment type="tissue specificity">
    <text evidence="5 7">Predominantly expressed in brain, heart, skeletal muscle, testis and thyroid (PubMed:15866882, PubMed:27399000). Expressed in neurons but not astrocytes or microglia (PubMed:27399000). Expressed at lower level in stomach (PubMed:15866882).</text>
</comment>
<comment type="domain">
    <text evidence="1">The N-terminal C2 domain associates with lipid membranes upon calcium binding. It modulates enzyme activity by presenting the active site to its substrate in response to elevations of cytosolic Ca(2+) (By similarity).</text>
</comment>
<sequence>MQSIPHSDEADVAGMTHASEGHHGLGTSMLVPKNPQGEEDSKLGRNCSGFEDAQDPQTAVPSSPLLSMASCSSQEGSSPCHLLTVRIIGMKNVRQADILSQTDCFVTLWLPTASQKKLKTRTISNCLHPEWDESFTFQIQTQVKNVLELSVCDEDTLTQNDHLLTVLYDLSKLCLRNKTHVKFPLNPEGMEELEVEFLLEENFSSSETLITNGVLVSRQVSCLEVHAESRRPRKRKKNKDLLVMVTDSFENTQRVPPCQEPCYPNSACFHYPKYSQPQLYAEAPKSHCNFRLCCCGTHRNDPVCQPLNCLSDGQVTTLPVGENYELHMKSSPCSDTLDVRLGFSLCQEEVEFVQKRKMVVAKTLSQMLQLEEGLHEDEVPIIAIMATGGGTRSMVSLYGHLLGLQKLNFLDASTYITGLSGATWTMATLYSDPEWSSKNLETVVFEARRHVVKDKMPALFPDQLYKWREDLQKHSQEGYKTTFTDFWGKLIEYSLGDKKNECKLSDQRAALCRGQNPLPIYLTINVKDDVSNQDFREWFEFSPYEVGMQKYGAFIPSELFGSEFFMGRLMKRIPEPEMCYMLGLWSSIFSLNLLDAWNLSHTSEEFFYRWTRERLHDIEDDPILPEIPRCDDNPLETTVVIPTTWLSNTFREILTRRPFVSEFHNFLYGMQLHTDYLQNRQFSMWKDTVLDTFPNQLTQFAKHLNLLDTAFFVNSSYAPLLRPERKVDLIIHLNYCAGSQTKPLKQTCEYCTEQKIPFPSFSILEDDNSLKECYVMENPQEPDAPIVAYFPLISDTFQKYKAPGVERSPDELELGQLNIYGPKSPYATKELTYTEAAFDKLVKLSEYNILNNRDKLIQALRLAMEKKRMRSQCPS</sequence>
<evidence type="ECO:0000250" key="1"/>
<evidence type="ECO:0000255" key="2">
    <source>
        <dbReference type="PROSITE-ProRule" id="PRU00041"/>
    </source>
</evidence>
<evidence type="ECO:0000255" key="3">
    <source>
        <dbReference type="PROSITE-ProRule" id="PRU00555"/>
    </source>
</evidence>
<evidence type="ECO:0000256" key="4">
    <source>
        <dbReference type="SAM" id="MobiDB-lite"/>
    </source>
</evidence>
<evidence type="ECO:0000269" key="5">
    <source>
    </source>
</evidence>
<evidence type="ECO:0000269" key="6">
    <source>
    </source>
</evidence>
<evidence type="ECO:0000269" key="7">
    <source>
    </source>
</evidence>
<evidence type="ECO:0000269" key="8">
    <source>
    </source>
</evidence>
<evidence type="ECO:0000303" key="9">
    <source>
    </source>
</evidence>
<evidence type="ECO:0000303" key="10">
    <source>
    </source>
</evidence>
<evidence type="ECO:0000303" key="11">
    <source>
    </source>
</evidence>
<evidence type="ECO:0000305" key="12"/>
<evidence type="ECO:0000305" key="13">
    <source>
    </source>
</evidence>
<evidence type="ECO:0000305" key="14">
    <source>
    </source>
</evidence>
<evidence type="ECO:0000305" key="15">
    <source>
    </source>
</evidence>
<evidence type="ECO:0000305" key="16">
    <source>
    </source>
</evidence>
<evidence type="ECO:0007744" key="17">
    <source>
    </source>
</evidence>
<accession>Q50L42</accession>
<accession>Q8BX44</accession>